<organism>
    <name type="scientific">Chlorobaculum parvum (strain DSM 263 / NCIMB 8327)</name>
    <name type="common">Chlorobium vibrioforme subsp. thiosulfatophilum</name>
    <dbReference type="NCBI Taxonomy" id="517417"/>
    <lineage>
        <taxon>Bacteria</taxon>
        <taxon>Pseudomonadati</taxon>
        <taxon>Chlorobiota</taxon>
        <taxon>Chlorobiia</taxon>
        <taxon>Chlorobiales</taxon>
        <taxon>Chlorobiaceae</taxon>
        <taxon>Chlorobaculum</taxon>
    </lineage>
</organism>
<sequence>MPGFIGREQHTVDDKGRLLIPARFRRKFLRQKDEESAEKAKRHEVLYVFKADDGSLELYEPAVWNEKEHQLLKLSDFNPEERLLTTMIYARLDQLELDRSGRIALSREMLDHAGIEREAVVIGANAKMIVWNPDRLTQLLADNAGSFSGLANRYVKGDGKSGVS</sequence>
<reference key="1">
    <citation type="submission" date="2008-06" db="EMBL/GenBank/DDBJ databases">
        <title>Complete sequence of Chlorobaculum parvum NCIB 8327.</title>
        <authorList>
            <consortium name="US DOE Joint Genome Institute"/>
            <person name="Lucas S."/>
            <person name="Copeland A."/>
            <person name="Lapidus A."/>
            <person name="Glavina del Rio T."/>
            <person name="Dalin E."/>
            <person name="Tice H."/>
            <person name="Bruce D."/>
            <person name="Goodwin L."/>
            <person name="Pitluck S."/>
            <person name="Schmutz J."/>
            <person name="Larimer F."/>
            <person name="Land M."/>
            <person name="Hauser L."/>
            <person name="Kyrpides N."/>
            <person name="Mikhailova N."/>
            <person name="Zhao F."/>
            <person name="Li T."/>
            <person name="Liu Z."/>
            <person name="Overmann J."/>
            <person name="Bryant D.A."/>
            <person name="Richardson P."/>
        </authorList>
    </citation>
    <scope>NUCLEOTIDE SEQUENCE [LARGE SCALE GENOMIC DNA]</scope>
    <source>
        <strain>DSM 263 / NCIMB 8327</strain>
    </source>
</reference>
<gene>
    <name evidence="1" type="primary">mraZ</name>
    <name type="ordered locus">Cpar_2073</name>
</gene>
<name>MRAZ_CHLP8</name>
<protein>
    <recommendedName>
        <fullName>Transcriptional regulator MraZ</fullName>
    </recommendedName>
</protein>
<proteinExistence type="inferred from homology"/>
<accession>B3QLX3</accession>
<comment type="subunit">
    <text evidence="1">Forms oligomers.</text>
</comment>
<comment type="subcellular location">
    <subcellularLocation>
        <location evidence="1">Cytoplasm</location>
        <location evidence="1">Nucleoid</location>
    </subcellularLocation>
</comment>
<comment type="similarity">
    <text evidence="1">Belongs to the MraZ family.</text>
</comment>
<evidence type="ECO:0000255" key="1">
    <source>
        <dbReference type="HAMAP-Rule" id="MF_01008"/>
    </source>
</evidence>
<evidence type="ECO:0000255" key="2">
    <source>
        <dbReference type="PROSITE-ProRule" id="PRU01076"/>
    </source>
</evidence>
<feature type="chain" id="PRO_1000134779" description="Transcriptional regulator MraZ">
    <location>
        <begin position="1"/>
        <end position="164"/>
    </location>
</feature>
<feature type="domain" description="SpoVT-AbrB 1" evidence="2">
    <location>
        <begin position="7"/>
        <end position="63"/>
    </location>
</feature>
<feature type="domain" description="SpoVT-AbrB 2" evidence="2">
    <location>
        <begin position="92"/>
        <end position="135"/>
    </location>
</feature>
<keyword id="KW-0963">Cytoplasm</keyword>
<keyword id="KW-0238">DNA-binding</keyword>
<keyword id="KW-0677">Repeat</keyword>
<keyword id="KW-0804">Transcription</keyword>
<keyword id="KW-0805">Transcription regulation</keyword>
<dbReference type="EMBL" id="CP001099">
    <property type="protein sequence ID" value="ACF12459.1"/>
    <property type="molecule type" value="Genomic_DNA"/>
</dbReference>
<dbReference type="RefSeq" id="WP_012503292.1">
    <property type="nucleotide sequence ID" value="NC_011027.1"/>
</dbReference>
<dbReference type="SMR" id="B3QLX3"/>
<dbReference type="STRING" id="517417.Cpar_2073"/>
<dbReference type="KEGG" id="cpc:Cpar_2073"/>
<dbReference type="eggNOG" id="COG2001">
    <property type="taxonomic scope" value="Bacteria"/>
</dbReference>
<dbReference type="HOGENOM" id="CLU_107907_0_5_10"/>
<dbReference type="OrthoDB" id="9807753at2"/>
<dbReference type="Proteomes" id="UP000008811">
    <property type="component" value="Chromosome"/>
</dbReference>
<dbReference type="GO" id="GO:0005737">
    <property type="term" value="C:cytoplasm"/>
    <property type="evidence" value="ECO:0007669"/>
    <property type="project" value="UniProtKB-UniRule"/>
</dbReference>
<dbReference type="GO" id="GO:0009295">
    <property type="term" value="C:nucleoid"/>
    <property type="evidence" value="ECO:0007669"/>
    <property type="project" value="UniProtKB-SubCell"/>
</dbReference>
<dbReference type="GO" id="GO:0003700">
    <property type="term" value="F:DNA-binding transcription factor activity"/>
    <property type="evidence" value="ECO:0007669"/>
    <property type="project" value="UniProtKB-UniRule"/>
</dbReference>
<dbReference type="GO" id="GO:0000976">
    <property type="term" value="F:transcription cis-regulatory region binding"/>
    <property type="evidence" value="ECO:0007669"/>
    <property type="project" value="TreeGrafter"/>
</dbReference>
<dbReference type="GO" id="GO:2000143">
    <property type="term" value="P:negative regulation of DNA-templated transcription initiation"/>
    <property type="evidence" value="ECO:0007669"/>
    <property type="project" value="TreeGrafter"/>
</dbReference>
<dbReference type="CDD" id="cd16321">
    <property type="entry name" value="MraZ_C"/>
    <property type="match status" value="1"/>
</dbReference>
<dbReference type="CDD" id="cd16320">
    <property type="entry name" value="MraZ_N"/>
    <property type="match status" value="1"/>
</dbReference>
<dbReference type="Gene3D" id="3.40.1550.20">
    <property type="entry name" value="Transcriptional regulator MraZ domain"/>
    <property type="match status" value="1"/>
</dbReference>
<dbReference type="HAMAP" id="MF_01008">
    <property type="entry name" value="MraZ"/>
    <property type="match status" value="1"/>
</dbReference>
<dbReference type="InterPro" id="IPR003444">
    <property type="entry name" value="MraZ"/>
</dbReference>
<dbReference type="InterPro" id="IPR035644">
    <property type="entry name" value="MraZ_C"/>
</dbReference>
<dbReference type="InterPro" id="IPR020603">
    <property type="entry name" value="MraZ_dom"/>
</dbReference>
<dbReference type="InterPro" id="IPR035642">
    <property type="entry name" value="MraZ_N"/>
</dbReference>
<dbReference type="InterPro" id="IPR038619">
    <property type="entry name" value="MraZ_sf"/>
</dbReference>
<dbReference type="InterPro" id="IPR007159">
    <property type="entry name" value="SpoVT-AbrB_dom"/>
</dbReference>
<dbReference type="InterPro" id="IPR037914">
    <property type="entry name" value="SpoVT-AbrB_sf"/>
</dbReference>
<dbReference type="NCBIfam" id="NF001476">
    <property type="entry name" value="PRK00326.2-2"/>
    <property type="match status" value="1"/>
</dbReference>
<dbReference type="PANTHER" id="PTHR34701">
    <property type="entry name" value="TRANSCRIPTIONAL REGULATOR MRAZ"/>
    <property type="match status" value="1"/>
</dbReference>
<dbReference type="PANTHER" id="PTHR34701:SF1">
    <property type="entry name" value="TRANSCRIPTIONAL REGULATOR MRAZ"/>
    <property type="match status" value="1"/>
</dbReference>
<dbReference type="Pfam" id="PF02381">
    <property type="entry name" value="MraZ"/>
    <property type="match status" value="2"/>
</dbReference>
<dbReference type="SUPFAM" id="SSF89447">
    <property type="entry name" value="AbrB/MazE/MraZ-like"/>
    <property type="match status" value="1"/>
</dbReference>
<dbReference type="PROSITE" id="PS51740">
    <property type="entry name" value="SPOVT_ABRB"/>
    <property type="match status" value="2"/>
</dbReference>